<name>T4S1_MOUSE</name>
<dbReference type="EMBL" id="L15443">
    <property type="protein sequence ID" value="AAA39403.1"/>
    <property type="molecule type" value="mRNA"/>
</dbReference>
<dbReference type="EMBL" id="L15429">
    <property type="protein sequence ID" value="AAA17873.1"/>
    <property type="molecule type" value="mRNA"/>
</dbReference>
<dbReference type="EMBL" id="AK077326">
    <property type="protein sequence ID" value="BAC36752.1"/>
    <property type="molecule type" value="mRNA"/>
</dbReference>
<dbReference type="EMBL" id="AK164718">
    <property type="protein sequence ID" value="BAE37888.1"/>
    <property type="molecule type" value="mRNA"/>
</dbReference>
<dbReference type="EMBL" id="BC083073">
    <property type="protein sequence ID" value="AAH83073.1"/>
    <property type="molecule type" value="mRNA"/>
</dbReference>
<dbReference type="CCDS" id="CCDS38433.1"/>
<dbReference type="PIR" id="A53399">
    <property type="entry name" value="A53399"/>
</dbReference>
<dbReference type="RefSeq" id="NP_001342059.1">
    <property type="nucleotide sequence ID" value="NM_001355130.2"/>
</dbReference>
<dbReference type="RefSeq" id="NP_001396993.1">
    <property type="nucleotide sequence ID" value="NM_001410064.1"/>
</dbReference>
<dbReference type="RefSeq" id="NP_032562.1">
    <property type="nucleotide sequence ID" value="NM_008536.5"/>
</dbReference>
<dbReference type="RefSeq" id="XP_006501143.1">
    <property type="nucleotide sequence ID" value="XM_006501080.1"/>
</dbReference>
<dbReference type="RefSeq" id="XP_030108305.1">
    <property type="nucleotide sequence ID" value="XM_030252445.2"/>
</dbReference>
<dbReference type="RefSeq" id="XP_030108306.1">
    <property type="nucleotide sequence ID" value="XM_030252446.1"/>
</dbReference>
<dbReference type="BioGRID" id="201262">
    <property type="interactions" value="1"/>
</dbReference>
<dbReference type="FunCoup" id="Q64302">
    <property type="interactions" value="949"/>
</dbReference>
<dbReference type="IntAct" id="Q64302">
    <property type="interactions" value="2"/>
</dbReference>
<dbReference type="MINT" id="Q64302"/>
<dbReference type="STRING" id="10090.ENSMUSP00000143652"/>
<dbReference type="GlyCosmos" id="Q64302">
    <property type="glycosylation" value="2 sites, No reported glycans"/>
</dbReference>
<dbReference type="GlyGen" id="Q64302">
    <property type="glycosylation" value="2 sites"/>
</dbReference>
<dbReference type="iPTMnet" id="Q64302"/>
<dbReference type="PhosphoSitePlus" id="Q64302"/>
<dbReference type="PaxDb" id="10090-ENSMUSP00000130999"/>
<dbReference type="ProteomicsDB" id="263237"/>
<dbReference type="Pumba" id="Q64302"/>
<dbReference type="Antibodypedia" id="1003">
    <property type="antibodies" value="270 antibodies from 32 providers"/>
</dbReference>
<dbReference type="DNASU" id="17112"/>
<dbReference type="Ensembl" id="ENSMUST00000029376.13">
    <property type="protein sequence ID" value="ENSMUSP00000029376.9"/>
    <property type="gene ID" value="ENSMUSG00000027800.15"/>
</dbReference>
<dbReference type="Ensembl" id="ENSMUST00000171384.8">
    <property type="protein sequence ID" value="ENSMUSP00000130999.2"/>
    <property type="gene ID" value="ENSMUSG00000027800.15"/>
</dbReference>
<dbReference type="Ensembl" id="ENSMUST00000196979.5">
    <property type="protein sequence ID" value="ENSMUSP00000143652.2"/>
    <property type="gene ID" value="ENSMUSG00000027800.15"/>
</dbReference>
<dbReference type="GeneID" id="17112"/>
<dbReference type="KEGG" id="mmu:17112"/>
<dbReference type="UCSC" id="uc008pgy.1">
    <property type="organism name" value="mouse"/>
</dbReference>
<dbReference type="AGR" id="MGI:104678"/>
<dbReference type="CTD" id="4071"/>
<dbReference type="MGI" id="MGI:104678">
    <property type="gene designation" value="Tm4sf1"/>
</dbReference>
<dbReference type="VEuPathDB" id="HostDB:ENSMUSG00000027800"/>
<dbReference type="eggNOG" id="ENOG502RY7H">
    <property type="taxonomic scope" value="Eukaryota"/>
</dbReference>
<dbReference type="GeneTree" id="ENSGT01030000234590"/>
<dbReference type="InParanoid" id="Q64302"/>
<dbReference type="OMA" id="ICRPCCY"/>
<dbReference type="OrthoDB" id="8697884at2759"/>
<dbReference type="PhylomeDB" id="Q64302"/>
<dbReference type="TreeFam" id="TF331371"/>
<dbReference type="BioGRID-ORCS" id="17112">
    <property type="hits" value="0 hits in 78 CRISPR screens"/>
</dbReference>
<dbReference type="ChiTaRS" id="Tm4sf1">
    <property type="organism name" value="mouse"/>
</dbReference>
<dbReference type="PRO" id="PR:Q64302"/>
<dbReference type="Proteomes" id="UP000000589">
    <property type="component" value="Chromosome 3"/>
</dbReference>
<dbReference type="RNAct" id="Q64302">
    <property type="molecule type" value="protein"/>
</dbReference>
<dbReference type="Bgee" id="ENSMUSG00000027800">
    <property type="expression patterns" value="Expressed in aorta tunica media and 213 other cell types or tissues"/>
</dbReference>
<dbReference type="ExpressionAtlas" id="Q64302">
    <property type="expression patterns" value="baseline and differential"/>
</dbReference>
<dbReference type="GO" id="GO:0005886">
    <property type="term" value="C:plasma membrane"/>
    <property type="evidence" value="ECO:0007669"/>
    <property type="project" value="Ensembl"/>
</dbReference>
<dbReference type="GO" id="GO:0001825">
    <property type="term" value="P:blastocyst formation"/>
    <property type="evidence" value="ECO:0000315"/>
    <property type="project" value="MGI"/>
</dbReference>
<dbReference type="InterPro" id="IPR008661">
    <property type="entry name" value="L6_membrane"/>
</dbReference>
<dbReference type="PANTHER" id="PTHR14198:SF18">
    <property type="entry name" value="TRANSMEMBRANE 4 L6 FAMILY MEMBER 1"/>
    <property type="match status" value="1"/>
</dbReference>
<dbReference type="PANTHER" id="PTHR14198">
    <property type="entry name" value="TRANSMEMBRANE 4 L6 FAMILY MEMBER 1-RELATED"/>
    <property type="match status" value="1"/>
</dbReference>
<dbReference type="Pfam" id="PF05805">
    <property type="entry name" value="L6_membrane"/>
    <property type="match status" value="1"/>
</dbReference>
<feature type="chain" id="PRO_0000219297" description="Transmembrane 4 L6 family member 1">
    <location>
        <begin position="1"/>
        <end position="202"/>
    </location>
</feature>
<feature type="topological domain" description="Cytoplasmic" evidence="6">
    <location>
        <begin position="1"/>
        <end position="9"/>
    </location>
</feature>
<feature type="transmembrane region" description="Helical" evidence="5">
    <location>
        <begin position="10"/>
        <end position="30"/>
    </location>
</feature>
<feature type="topological domain" description="Extracellular" evidence="6">
    <location>
        <begin position="31"/>
        <end position="49"/>
    </location>
</feature>
<feature type="transmembrane region" description="Helical" evidence="5">
    <location>
        <begin position="50"/>
        <end position="70"/>
    </location>
</feature>
<feature type="topological domain" description="Cytoplasmic" evidence="6">
    <location>
        <begin position="71"/>
        <end position="93"/>
    </location>
</feature>
<feature type="transmembrane region" description="Helical" evidence="5">
    <location>
        <begin position="94"/>
        <end position="114"/>
    </location>
</feature>
<feature type="topological domain" description="Extracellular" evidence="6">
    <location>
        <begin position="115"/>
        <end position="161"/>
    </location>
</feature>
<feature type="transmembrane region" description="Helical" evidence="5">
    <location>
        <begin position="162"/>
        <end position="182"/>
    </location>
</feature>
<feature type="topological domain" description="Cytoplasmic" evidence="6">
    <location>
        <begin position="183"/>
        <end position="202"/>
    </location>
</feature>
<feature type="glycosylation site" description="N-linked (GlcNAc...) asparagine" evidence="2">
    <location>
        <position position="129"/>
    </location>
</feature>
<feature type="glycosylation site" description="N-linked (GlcNAc...) asparagine" evidence="3">
    <location>
        <position position="142"/>
    </location>
</feature>
<reference key="1">
    <citation type="journal article" date="1994" name="J. Biol. Chem.">
        <title>Membrane topology of the L6 antigen and identification of the protein epitope recognized by the L6 monoclonal antibody.</title>
        <authorList>
            <person name="Marken J.S."/>
            <person name="Bajorath J."/>
            <person name="Edwards C.P."/>
            <person name="Farr A.G."/>
            <person name="Schieven G.L."/>
            <person name="Hellstroem I."/>
            <person name="Hellstroem K.E."/>
            <person name="Aruffo A."/>
        </authorList>
    </citation>
    <scope>NUCLEOTIDE SEQUENCE [MRNA]</scope>
    <scope>TISSUE SPECIFICITY</scope>
    <scope>TOPOLOGY</scope>
    <source>
        <strain>BALB/cJ</strain>
        <tissue>Thymic epithelium</tissue>
    </source>
</reference>
<reference key="2">
    <citation type="journal article" date="2005" name="Science">
        <title>The transcriptional landscape of the mammalian genome.</title>
        <authorList>
            <person name="Carninci P."/>
            <person name="Kasukawa T."/>
            <person name="Katayama S."/>
            <person name="Gough J."/>
            <person name="Frith M.C."/>
            <person name="Maeda N."/>
            <person name="Oyama R."/>
            <person name="Ravasi T."/>
            <person name="Lenhard B."/>
            <person name="Wells C."/>
            <person name="Kodzius R."/>
            <person name="Shimokawa K."/>
            <person name="Bajic V.B."/>
            <person name="Brenner S.E."/>
            <person name="Batalov S."/>
            <person name="Forrest A.R."/>
            <person name="Zavolan M."/>
            <person name="Davis M.J."/>
            <person name="Wilming L.G."/>
            <person name="Aidinis V."/>
            <person name="Allen J.E."/>
            <person name="Ambesi-Impiombato A."/>
            <person name="Apweiler R."/>
            <person name="Aturaliya R.N."/>
            <person name="Bailey T.L."/>
            <person name="Bansal M."/>
            <person name="Baxter L."/>
            <person name="Beisel K.W."/>
            <person name="Bersano T."/>
            <person name="Bono H."/>
            <person name="Chalk A.M."/>
            <person name="Chiu K.P."/>
            <person name="Choudhary V."/>
            <person name="Christoffels A."/>
            <person name="Clutterbuck D.R."/>
            <person name="Crowe M.L."/>
            <person name="Dalla E."/>
            <person name="Dalrymple B.P."/>
            <person name="de Bono B."/>
            <person name="Della Gatta G."/>
            <person name="di Bernardo D."/>
            <person name="Down T."/>
            <person name="Engstrom P."/>
            <person name="Fagiolini M."/>
            <person name="Faulkner G."/>
            <person name="Fletcher C.F."/>
            <person name="Fukushima T."/>
            <person name="Furuno M."/>
            <person name="Futaki S."/>
            <person name="Gariboldi M."/>
            <person name="Georgii-Hemming P."/>
            <person name="Gingeras T.R."/>
            <person name="Gojobori T."/>
            <person name="Green R.E."/>
            <person name="Gustincich S."/>
            <person name="Harbers M."/>
            <person name="Hayashi Y."/>
            <person name="Hensch T.K."/>
            <person name="Hirokawa N."/>
            <person name="Hill D."/>
            <person name="Huminiecki L."/>
            <person name="Iacono M."/>
            <person name="Ikeo K."/>
            <person name="Iwama A."/>
            <person name="Ishikawa T."/>
            <person name="Jakt M."/>
            <person name="Kanapin A."/>
            <person name="Katoh M."/>
            <person name="Kawasawa Y."/>
            <person name="Kelso J."/>
            <person name="Kitamura H."/>
            <person name="Kitano H."/>
            <person name="Kollias G."/>
            <person name="Krishnan S.P."/>
            <person name="Kruger A."/>
            <person name="Kummerfeld S.K."/>
            <person name="Kurochkin I.V."/>
            <person name="Lareau L.F."/>
            <person name="Lazarevic D."/>
            <person name="Lipovich L."/>
            <person name="Liu J."/>
            <person name="Liuni S."/>
            <person name="McWilliam S."/>
            <person name="Madan Babu M."/>
            <person name="Madera M."/>
            <person name="Marchionni L."/>
            <person name="Matsuda H."/>
            <person name="Matsuzawa S."/>
            <person name="Miki H."/>
            <person name="Mignone F."/>
            <person name="Miyake S."/>
            <person name="Morris K."/>
            <person name="Mottagui-Tabar S."/>
            <person name="Mulder N."/>
            <person name="Nakano N."/>
            <person name="Nakauchi H."/>
            <person name="Ng P."/>
            <person name="Nilsson R."/>
            <person name="Nishiguchi S."/>
            <person name="Nishikawa S."/>
            <person name="Nori F."/>
            <person name="Ohara O."/>
            <person name="Okazaki Y."/>
            <person name="Orlando V."/>
            <person name="Pang K.C."/>
            <person name="Pavan W.J."/>
            <person name="Pavesi G."/>
            <person name="Pesole G."/>
            <person name="Petrovsky N."/>
            <person name="Piazza S."/>
            <person name="Reed J."/>
            <person name="Reid J.F."/>
            <person name="Ring B.Z."/>
            <person name="Ringwald M."/>
            <person name="Rost B."/>
            <person name="Ruan Y."/>
            <person name="Salzberg S.L."/>
            <person name="Sandelin A."/>
            <person name="Schneider C."/>
            <person name="Schoenbach C."/>
            <person name="Sekiguchi K."/>
            <person name="Semple C.A."/>
            <person name="Seno S."/>
            <person name="Sessa L."/>
            <person name="Sheng Y."/>
            <person name="Shibata Y."/>
            <person name="Shimada H."/>
            <person name="Shimada K."/>
            <person name="Silva D."/>
            <person name="Sinclair B."/>
            <person name="Sperling S."/>
            <person name="Stupka E."/>
            <person name="Sugiura K."/>
            <person name="Sultana R."/>
            <person name="Takenaka Y."/>
            <person name="Taki K."/>
            <person name="Tammoja K."/>
            <person name="Tan S.L."/>
            <person name="Tang S."/>
            <person name="Taylor M.S."/>
            <person name="Tegner J."/>
            <person name="Teichmann S.A."/>
            <person name="Ueda H.R."/>
            <person name="van Nimwegen E."/>
            <person name="Verardo R."/>
            <person name="Wei C.L."/>
            <person name="Yagi K."/>
            <person name="Yamanishi H."/>
            <person name="Zabarovsky E."/>
            <person name="Zhu S."/>
            <person name="Zimmer A."/>
            <person name="Hide W."/>
            <person name="Bult C."/>
            <person name="Grimmond S.M."/>
            <person name="Teasdale R.D."/>
            <person name="Liu E.T."/>
            <person name="Brusic V."/>
            <person name="Quackenbush J."/>
            <person name="Wahlestedt C."/>
            <person name="Mattick J.S."/>
            <person name="Hume D.A."/>
            <person name="Kai C."/>
            <person name="Sasaki D."/>
            <person name="Tomaru Y."/>
            <person name="Fukuda S."/>
            <person name="Kanamori-Katayama M."/>
            <person name="Suzuki M."/>
            <person name="Aoki J."/>
            <person name="Arakawa T."/>
            <person name="Iida J."/>
            <person name="Imamura K."/>
            <person name="Itoh M."/>
            <person name="Kato T."/>
            <person name="Kawaji H."/>
            <person name="Kawagashira N."/>
            <person name="Kawashima T."/>
            <person name="Kojima M."/>
            <person name="Kondo S."/>
            <person name="Konno H."/>
            <person name="Nakano K."/>
            <person name="Ninomiya N."/>
            <person name="Nishio T."/>
            <person name="Okada M."/>
            <person name="Plessy C."/>
            <person name="Shibata K."/>
            <person name="Shiraki T."/>
            <person name="Suzuki S."/>
            <person name="Tagami M."/>
            <person name="Waki K."/>
            <person name="Watahiki A."/>
            <person name="Okamura-Oho Y."/>
            <person name="Suzuki H."/>
            <person name="Kawai J."/>
            <person name="Hayashizaki Y."/>
        </authorList>
    </citation>
    <scope>NUCLEOTIDE SEQUENCE [LARGE SCALE MRNA]</scope>
    <source>
        <strain>C57BL/6J</strain>
        <tissue>Kidney</tissue>
        <tissue>Pituitary</tissue>
    </source>
</reference>
<reference key="3">
    <citation type="journal article" date="2004" name="Genome Res.">
        <title>The status, quality, and expansion of the NIH full-length cDNA project: the Mammalian Gene Collection (MGC).</title>
        <authorList>
            <consortium name="The MGC Project Team"/>
        </authorList>
    </citation>
    <scope>NUCLEOTIDE SEQUENCE [LARGE SCALE MRNA]</scope>
    <source>
        <tissue>Olfactory epithelium</tissue>
    </source>
</reference>
<reference key="4">
    <citation type="journal article" date="2009" name="Mol. Cell. Proteomics">
        <title>The mouse C2C12 myoblast cell surface N-linked glycoproteome: identification, glycosite occupancy, and membrane orientation.</title>
        <authorList>
            <person name="Gundry R.L."/>
            <person name="Raginski K."/>
            <person name="Tarasova Y."/>
            <person name="Tchernyshyov I."/>
            <person name="Bausch-Fluck D."/>
            <person name="Elliott S.T."/>
            <person name="Boheler K.R."/>
            <person name="Van Eyk J.E."/>
            <person name="Wollscheid B."/>
        </authorList>
    </citation>
    <scope>GLYCOSYLATION [LARGE SCALE ANALYSIS] AT ASN-142</scope>
    <source>
        <tissue>Myoblast</tissue>
    </source>
</reference>
<accession>Q64302</accession>
<accession>Q3TP49</accession>
<proteinExistence type="evidence at protein level"/>
<gene>
    <name type="primary">Tm4sf1</name>
    <name type="synonym">M3s1</name>
</gene>
<sequence>MCYVKCARYIGYSLVWAAVFCIVANALLYFPNGETKYATEDHLSRFVWYFAGIVGGGLLMLLPAFVFIGMDEEDCCGCCGYENYGKRCSMLSSVLAALIGIVGSAYCVIVASLGLAEGPKCSDAHGVWNYTFASTEGQYLLNSSMWSKCYEPKHIVEWHVTLFSILLAFAAVEFILCLIQVINGMLGGLCGYCCSRQQQYNC</sequence>
<keyword id="KW-0325">Glycoprotein</keyword>
<keyword id="KW-0472">Membrane</keyword>
<keyword id="KW-1185">Reference proteome</keyword>
<keyword id="KW-0812">Transmembrane</keyword>
<keyword id="KW-1133">Transmembrane helix</keyword>
<organism>
    <name type="scientific">Mus musculus</name>
    <name type="common">Mouse</name>
    <dbReference type="NCBI Taxonomy" id="10090"/>
    <lineage>
        <taxon>Eukaryota</taxon>
        <taxon>Metazoa</taxon>
        <taxon>Chordata</taxon>
        <taxon>Craniata</taxon>
        <taxon>Vertebrata</taxon>
        <taxon>Euteleostomi</taxon>
        <taxon>Mammalia</taxon>
        <taxon>Eutheria</taxon>
        <taxon>Euarchontoglires</taxon>
        <taxon>Glires</taxon>
        <taxon>Rodentia</taxon>
        <taxon>Myomorpha</taxon>
        <taxon>Muroidea</taxon>
        <taxon>Muridae</taxon>
        <taxon>Murinae</taxon>
        <taxon>Mus</taxon>
        <taxon>Mus</taxon>
    </lineage>
</organism>
<protein>
    <recommendedName>
        <fullName>Transmembrane 4 L6 family member 1</fullName>
    </recommendedName>
    <alternativeName>
        <fullName>Membrane component chromosome 3 surface marker 1 homolog</fullName>
    </alternativeName>
    <alternativeName>
        <fullName>Tumor-associated antigen L6</fullName>
    </alternativeName>
</protein>
<comment type="subunit">
    <text evidence="1">Present in high molecular weight complexes in tumor cells. Interacts with SDCBP2 (By similarity).</text>
</comment>
<comment type="subcellular location">
    <subcellularLocation>
        <location>Membrane</location>
        <topology>Multi-pass membrane protein</topology>
    </subcellularLocation>
    <text evidence="1">Colocalizes with SDCBP2 in the apical region of the cell.</text>
</comment>
<comment type="tissue specificity">
    <text evidence="4">Highly expressed in skin and lung. Moderately expressed in lymph nodes and kidneys. Also present in thymic stroma and fibroblasts.</text>
</comment>
<comment type="similarity">
    <text evidence="5">Belongs to the L6 tetraspanin family.</text>
</comment>
<evidence type="ECO:0000250" key="1">
    <source>
        <dbReference type="UniProtKB" id="P30408"/>
    </source>
</evidence>
<evidence type="ECO:0000255" key="2"/>
<evidence type="ECO:0000269" key="3">
    <source>
    </source>
</evidence>
<evidence type="ECO:0000269" key="4">
    <source>
    </source>
</evidence>
<evidence type="ECO:0000305" key="5"/>
<evidence type="ECO:0000305" key="6">
    <source>
    </source>
</evidence>